<dbReference type="EMBL" id="CU329670">
    <property type="protein sequence ID" value="CAK9837610.1"/>
    <property type="molecule type" value="Genomic_DNA"/>
</dbReference>
<dbReference type="PIR" id="T37739">
    <property type="entry name" value="T37739"/>
</dbReference>
<dbReference type="RefSeq" id="NP_593381.2">
    <property type="nucleotide sequence ID" value="NM_001018813.2"/>
</dbReference>
<dbReference type="BioGRID" id="279240">
    <property type="interactions" value="43"/>
</dbReference>
<dbReference type="FunCoup" id="O94539">
    <property type="interactions" value="44"/>
</dbReference>
<dbReference type="STRING" id="284812.O94539"/>
<dbReference type="PaxDb" id="4896-SPAC167.04.1"/>
<dbReference type="EnsemblFungi" id="SPAC167.04.1">
    <property type="protein sequence ID" value="SPAC167.04.1:pep"/>
    <property type="gene ID" value="SPAC167.04"/>
</dbReference>
<dbReference type="GeneID" id="2542791"/>
<dbReference type="KEGG" id="spo:2542791"/>
<dbReference type="PomBase" id="SPAC167.04">
    <property type="gene designation" value="pam17"/>
</dbReference>
<dbReference type="VEuPathDB" id="FungiDB:SPAC167.04"/>
<dbReference type="eggNOG" id="ENOG502S1B1">
    <property type="taxonomic scope" value="Eukaryota"/>
</dbReference>
<dbReference type="HOGENOM" id="CLU_068297_2_0_1"/>
<dbReference type="InParanoid" id="O94539"/>
<dbReference type="OMA" id="MIFGFDP"/>
<dbReference type="PRO" id="PR:O94539"/>
<dbReference type="Proteomes" id="UP000002485">
    <property type="component" value="Chromosome I"/>
</dbReference>
<dbReference type="GO" id="GO:0005739">
    <property type="term" value="C:mitochondrion"/>
    <property type="evidence" value="ECO:0007005"/>
    <property type="project" value="PomBase"/>
</dbReference>
<dbReference type="GO" id="GO:0001405">
    <property type="term" value="C:PAM complex, Tim23 associated import motor"/>
    <property type="evidence" value="ECO:0007669"/>
    <property type="project" value="UniProtKB-UniRule"/>
</dbReference>
<dbReference type="GO" id="GO:0030150">
    <property type="term" value="P:protein import into mitochondrial matrix"/>
    <property type="evidence" value="ECO:0007669"/>
    <property type="project" value="UniProtKB-UniRule"/>
</dbReference>
<dbReference type="InterPro" id="IPR013875">
    <property type="entry name" value="Pam17"/>
</dbReference>
<dbReference type="PANTHER" id="PTHR28021">
    <property type="entry name" value="PRESEQUENCE TRANSLOCATED-ASSOCIATED MOTOR SUBUNIT PAM17, MITOCHONDRIAL"/>
    <property type="match status" value="1"/>
</dbReference>
<dbReference type="PANTHER" id="PTHR28021:SF1">
    <property type="entry name" value="PRESEQUENCE TRANSLOCATED-ASSOCIATED MOTOR SUBUNIT PAM17, MITOCHONDRIAL"/>
    <property type="match status" value="1"/>
</dbReference>
<dbReference type="Pfam" id="PF08566">
    <property type="entry name" value="Pam17"/>
    <property type="match status" value="1"/>
</dbReference>
<reference key="1">
    <citation type="journal article" date="2002" name="Nature">
        <title>The genome sequence of Schizosaccharomyces pombe.</title>
        <authorList>
            <person name="Wood V."/>
            <person name="Gwilliam R."/>
            <person name="Rajandream M.A."/>
            <person name="Lyne M.H."/>
            <person name="Lyne R."/>
            <person name="Stewart A."/>
            <person name="Sgouros J.G."/>
            <person name="Peat N."/>
            <person name="Hayles J."/>
            <person name="Baker S.G."/>
            <person name="Basham D."/>
            <person name="Bowman S."/>
            <person name="Brooks K."/>
            <person name="Brown D."/>
            <person name="Brown S."/>
            <person name="Chillingworth T."/>
            <person name="Churcher C.M."/>
            <person name="Collins M."/>
            <person name="Connor R."/>
            <person name="Cronin A."/>
            <person name="Davis P."/>
            <person name="Feltwell T."/>
            <person name="Fraser A."/>
            <person name="Gentles S."/>
            <person name="Goble A."/>
            <person name="Hamlin N."/>
            <person name="Harris D.E."/>
            <person name="Hidalgo J."/>
            <person name="Hodgson G."/>
            <person name="Holroyd S."/>
            <person name="Hornsby T."/>
            <person name="Howarth S."/>
            <person name="Huckle E.J."/>
            <person name="Hunt S."/>
            <person name="Jagels K."/>
            <person name="James K.D."/>
            <person name="Jones L."/>
            <person name="Jones M."/>
            <person name="Leather S."/>
            <person name="McDonald S."/>
            <person name="McLean J."/>
            <person name="Mooney P."/>
            <person name="Moule S."/>
            <person name="Mungall K.L."/>
            <person name="Murphy L.D."/>
            <person name="Niblett D."/>
            <person name="Odell C."/>
            <person name="Oliver K."/>
            <person name="O'Neil S."/>
            <person name="Pearson D."/>
            <person name="Quail M.A."/>
            <person name="Rabbinowitsch E."/>
            <person name="Rutherford K.M."/>
            <person name="Rutter S."/>
            <person name="Saunders D."/>
            <person name="Seeger K."/>
            <person name="Sharp S."/>
            <person name="Skelton J."/>
            <person name="Simmonds M.N."/>
            <person name="Squares R."/>
            <person name="Squares S."/>
            <person name="Stevens K."/>
            <person name="Taylor K."/>
            <person name="Taylor R.G."/>
            <person name="Tivey A."/>
            <person name="Walsh S.V."/>
            <person name="Warren T."/>
            <person name="Whitehead S."/>
            <person name="Woodward J.R."/>
            <person name="Volckaert G."/>
            <person name="Aert R."/>
            <person name="Robben J."/>
            <person name="Grymonprez B."/>
            <person name="Weltjens I."/>
            <person name="Vanstreels E."/>
            <person name="Rieger M."/>
            <person name="Schaefer M."/>
            <person name="Mueller-Auer S."/>
            <person name="Gabel C."/>
            <person name="Fuchs M."/>
            <person name="Duesterhoeft A."/>
            <person name="Fritzc C."/>
            <person name="Holzer E."/>
            <person name="Moestl D."/>
            <person name="Hilbert H."/>
            <person name="Borzym K."/>
            <person name="Langer I."/>
            <person name="Beck A."/>
            <person name="Lehrach H."/>
            <person name="Reinhardt R."/>
            <person name="Pohl T.M."/>
            <person name="Eger P."/>
            <person name="Zimmermann W."/>
            <person name="Wedler H."/>
            <person name="Wambutt R."/>
            <person name="Purnelle B."/>
            <person name="Goffeau A."/>
            <person name="Cadieu E."/>
            <person name="Dreano S."/>
            <person name="Gloux S."/>
            <person name="Lelaure V."/>
            <person name="Mottier S."/>
            <person name="Galibert F."/>
            <person name="Aves S.J."/>
            <person name="Xiang Z."/>
            <person name="Hunt C."/>
            <person name="Moore K."/>
            <person name="Hurst S.M."/>
            <person name="Lucas M."/>
            <person name="Rochet M."/>
            <person name="Gaillardin C."/>
            <person name="Tallada V.A."/>
            <person name="Garzon A."/>
            <person name="Thode G."/>
            <person name="Daga R.R."/>
            <person name="Cruzado L."/>
            <person name="Jimenez J."/>
            <person name="Sanchez M."/>
            <person name="del Rey F."/>
            <person name="Benito J."/>
            <person name="Dominguez A."/>
            <person name="Revuelta J.L."/>
            <person name="Moreno S."/>
            <person name="Armstrong J."/>
            <person name="Forsburg S.L."/>
            <person name="Cerutti L."/>
            <person name="Lowe T."/>
            <person name="McCombie W.R."/>
            <person name="Paulsen I."/>
            <person name="Potashkin J."/>
            <person name="Shpakovski G.V."/>
            <person name="Ussery D."/>
            <person name="Barrell B.G."/>
            <person name="Nurse P."/>
        </authorList>
    </citation>
    <scope>NUCLEOTIDE SEQUENCE [LARGE SCALE GENOMIC DNA]</scope>
    <source>
        <strain>972 / ATCC 24843</strain>
    </source>
</reference>
<reference key="2">
    <citation type="journal article" date="2011" name="Science">
        <title>Comparative functional genomics of the fission yeasts.</title>
        <authorList>
            <person name="Rhind N."/>
            <person name="Chen Z."/>
            <person name="Yassour M."/>
            <person name="Thompson D.A."/>
            <person name="Haas B.J."/>
            <person name="Habib N."/>
            <person name="Wapinski I."/>
            <person name="Roy S."/>
            <person name="Lin M.F."/>
            <person name="Heiman D.I."/>
            <person name="Young S.K."/>
            <person name="Furuya K."/>
            <person name="Guo Y."/>
            <person name="Pidoux A."/>
            <person name="Chen H.M."/>
            <person name="Robbertse B."/>
            <person name="Goldberg J.M."/>
            <person name="Aoki K."/>
            <person name="Bayne E.H."/>
            <person name="Berlin A.M."/>
            <person name="Desjardins C.A."/>
            <person name="Dobbs E."/>
            <person name="Dukaj L."/>
            <person name="Fan L."/>
            <person name="FitzGerald M.G."/>
            <person name="French C."/>
            <person name="Gujja S."/>
            <person name="Hansen K."/>
            <person name="Keifenheim D."/>
            <person name="Levin J.Z."/>
            <person name="Mosher R.A."/>
            <person name="Mueller C.A."/>
            <person name="Pfiffner J."/>
            <person name="Priest M."/>
            <person name="Russ C."/>
            <person name="Smialowska A."/>
            <person name="Swoboda P."/>
            <person name="Sykes S.M."/>
            <person name="Vaughn M."/>
            <person name="Vengrova S."/>
            <person name="Yoder R."/>
            <person name="Zeng Q."/>
            <person name="Allshire R."/>
            <person name="Baulcombe D."/>
            <person name="Birren B.W."/>
            <person name="Brown W."/>
            <person name="Ekwall K."/>
            <person name="Kellis M."/>
            <person name="Leatherwood J."/>
            <person name="Levin H."/>
            <person name="Margalit H."/>
            <person name="Martienssen R."/>
            <person name="Nieduszynski C.A."/>
            <person name="Spatafora J.W."/>
            <person name="Friedman N."/>
            <person name="Dalgaard J.Z."/>
            <person name="Baumann P."/>
            <person name="Niki H."/>
            <person name="Regev A."/>
            <person name="Nusbaum C."/>
        </authorList>
    </citation>
    <scope>REVISION OF GENE MODEL</scope>
</reference>
<reference key="3">
    <citation type="journal article" date="2006" name="Nat. Biotechnol.">
        <title>ORFeome cloning and global analysis of protein localization in the fission yeast Schizosaccharomyces pombe.</title>
        <authorList>
            <person name="Matsuyama A."/>
            <person name="Arai R."/>
            <person name="Yashiroda Y."/>
            <person name="Shirai A."/>
            <person name="Kamata A."/>
            <person name="Sekido S."/>
            <person name="Kobayashi Y."/>
            <person name="Hashimoto A."/>
            <person name="Hamamoto M."/>
            <person name="Hiraoka Y."/>
            <person name="Horinouchi S."/>
            <person name="Yoshida M."/>
        </authorList>
    </citation>
    <scope>SUBCELLULAR LOCATION [LARGE SCALE ANALYSIS]</scope>
</reference>
<gene>
    <name type="primary">pam17</name>
    <name evidence="4" type="ORF">SPAC167.04</name>
</gene>
<organism>
    <name type="scientific">Schizosaccharomyces pombe (strain 972 / ATCC 24843)</name>
    <name type="common">Fission yeast</name>
    <dbReference type="NCBI Taxonomy" id="284812"/>
    <lineage>
        <taxon>Eukaryota</taxon>
        <taxon>Fungi</taxon>
        <taxon>Dikarya</taxon>
        <taxon>Ascomycota</taxon>
        <taxon>Taphrinomycotina</taxon>
        <taxon>Schizosaccharomycetes</taxon>
        <taxon>Schizosaccharomycetales</taxon>
        <taxon>Schizosaccharomycetaceae</taxon>
        <taxon>Schizosaccharomyces</taxon>
    </lineage>
</organism>
<sequence>MIPIIRPGLVVKRLQSPKIFLTLWKTCYNVKTYSTESIKQKKPQDLNWPTFLKLRKSRRIFETLTSIPTALTGLGLGSAYFLTRTVDPTMTIMGLDLFTLYVIGTIASGGLGWLLGPSIGRKIWTLLHKSQARQIAAREQEFYRHLVKNRVTPQMESYSNPIPDYYGEKIYSLSDYRRWLRDQKAYIQRAFWRTSNR</sequence>
<keyword id="KW-0472">Membrane</keyword>
<keyword id="KW-0496">Mitochondrion</keyword>
<keyword id="KW-0999">Mitochondrion inner membrane</keyword>
<keyword id="KW-0653">Protein transport</keyword>
<keyword id="KW-1185">Reference proteome</keyword>
<keyword id="KW-0809">Transit peptide</keyword>
<keyword id="KW-0811">Translocation</keyword>
<keyword id="KW-0812">Transmembrane</keyword>
<keyword id="KW-1133">Transmembrane helix</keyword>
<keyword id="KW-0813">Transport</keyword>
<evidence type="ECO:0000250" key="1"/>
<evidence type="ECO:0000255" key="2"/>
<evidence type="ECO:0000305" key="3"/>
<evidence type="ECO:0000312" key="4">
    <source>
        <dbReference type="PomBase" id="SPAC167.04"/>
    </source>
</evidence>
<name>PAM17_SCHPO</name>
<protein>
    <recommendedName>
        <fullName>Presequence translocated-associated motor subunit pam17, mitochondrial</fullName>
    </recommendedName>
</protein>
<feature type="transit peptide" description="Mitochondrion" evidence="2">
    <location>
        <begin position="1"/>
        <end position="33"/>
    </location>
</feature>
<feature type="chain" id="PRO_0000043159" description="Presequence translocated-associated motor subunit pam17, mitochondrial">
    <location>
        <begin position="34"/>
        <end position="197"/>
    </location>
</feature>
<feature type="topological domain" description="Mitochondrial matrix" evidence="3">
    <location>
        <begin position="34"/>
        <end position="62"/>
    </location>
</feature>
<feature type="transmembrane region" description="Helical" evidence="2">
    <location>
        <begin position="63"/>
        <end position="83"/>
    </location>
</feature>
<feature type="topological domain" description="Mitochondrial intermembrane" evidence="3">
    <location>
        <begin position="84"/>
        <end position="96"/>
    </location>
</feature>
<feature type="transmembrane region" description="Helical" evidence="2">
    <location>
        <begin position="97"/>
        <end position="117"/>
    </location>
</feature>
<feature type="topological domain" description="Mitochondrial matrix" evidence="3">
    <location>
        <begin position="118"/>
        <end position="197"/>
    </location>
</feature>
<accession>O94539</accession>
<accession>A0AAN2H618</accession>
<proteinExistence type="inferred from homology"/>
<comment type="function">
    <text evidence="1">Component of the PAM complex, a complex required for the translocation of transit peptide-containing proteins from the inner membrane into the mitochondrial matrix in an ATP-dependent manner.</text>
</comment>
<comment type="subunit">
    <text evidence="1">Component of the PAM complex, at least composed of mtHsp70 (ssc1), mge1, tim44, pam16, pam17 and pam18.</text>
</comment>
<comment type="subcellular location">
    <subcellularLocation>
        <location evidence="1">Mitochondrion inner membrane</location>
        <topology evidence="1">Multi-pass membrane protein</topology>
    </subcellularLocation>
</comment>
<comment type="similarity">
    <text evidence="3">Belongs to the PAM17 family.</text>
</comment>